<evidence type="ECO:0000250" key="1"/>
<evidence type="ECO:0000255" key="2"/>
<evidence type="ECO:0000255" key="3">
    <source>
        <dbReference type="PROSITE-ProRule" id="PRU00376"/>
    </source>
</evidence>
<evidence type="ECO:0000256" key="4">
    <source>
        <dbReference type="SAM" id="MobiDB-lite"/>
    </source>
</evidence>
<evidence type="ECO:0000305" key="5"/>
<gene>
    <name type="primary">YAF9</name>
    <name type="ordered locus">CAALFM_C703770CA</name>
    <name type="ORF">CaJ7.0432</name>
    <name type="ORF">CaO19.5501</name>
</gene>
<reference key="1">
    <citation type="journal article" date="2005" name="Genetics">
        <title>Sequence finishing and gene mapping for Candida albicans chromosome 7 and syntenic analysis against the Saccharomyces cerevisiae genome.</title>
        <authorList>
            <person name="Chibana H."/>
            <person name="Oka N."/>
            <person name="Nakayama H."/>
            <person name="Aoyama T."/>
            <person name="Magee B.B."/>
            <person name="Magee P.T."/>
            <person name="Mikami Y."/>
        </authorList>
    </citation>
    <scope>NUCLEOTIDE SEQUENCE [LARGE SCALE GENOMIC DNA]</scope>
    <source>
        <strain>SC5314 / ATCC MYA-2876</strain>
    </source>
</reference>
<reference key="2">
    <citation type="journal article" date="2004" name="Proc. Natl. Acad. Sci. U.S.A.">
        <title>The diploid genome sequence of Candida albicans.</title>
        <authorList>
            <person name="Jones T."/>
            <person name="Federspiel N.A."/>
            <person name="Chibana H."/>
            <person name="Dungan J."/>
            <person name="Kalman S."/>
            <person name="Magee B.B."/>
            <person name="Newport G."/>
            <person name="Thorstenson Y.R."/>
            <person name="Agabian N."/>
            <person name="Magee P.T."/>
            <person name="Davis R.W."/>
            <person name="Scherer S."/>
        </authorList>
    </citation>
    <scope>NUCLEOTIDE SEQUENCE [LARGE SCALE GENOMIC DNA]</scope>
    <source>
        <strain>SC5314 / ATCC MYA-2876</strain>
    </source>
</reference>
<reference key="3">
    <citation type="journal article" date="2007" name="Genome Biol.">
        <title>Assembly of the Candida albicans genome into sixteen supercontigs aligned on the eight chromosomes.</title>
        <authorList>
            <person name="van het Hoog M."/>
            <person name="Rast T.J."/>
            <person name="Martchenko M."/>
            <person name="Grindle S."/>
            <person name="Dignard D."/>
            <person name="Hogues H."/>
            <person name="Cuomo C."/>
            <person name="Berriman M."/>
            <person name="Scherer S."/>
            <person name="Magee B.B."/>
            <person name="Whiteway M."/>
            <person name="Chibana H."/>
            <person name="Nantel A."/>
            <person name="Magee P.T."/>
        </authorList>
    </citation>
    <scope>GENOME REANNOTATION</scope>
    <source>
        <strain>SC5314 / ATCC MYA-2876</strain>
    </source>
</reference>
<reference key="4">
    <citation type="journal article" date="2013" name="Genome Biol.">
        <title>Assembly of a phased diploid Candida albicans genome facilitates allele-specific measurements and provides a simple model for repeat and indel structure.</title>
        <authorList>
            <person name="Muzzey D."/>
            <person name="Schwartz K."/>
            <person name="Weissman J.S."/>
            <person name="Sherlock G."/>
        </authorList>
    </citation>
    <scope>NUCLEOTIDE SEQUENCE [LARGE SCALE GENOMIC DNA]</scope>
    <scope>GENOME REANNOTATION</scope>
    <source>
        <strain>SC5314 / ATCC MYA-2876</strain>
    </source>
</reference>
<protein>
    <recommendedName>
        <fullName>Protein AF-9 homolog</fullName>
    </recommendedName>
</protein>
<keyword id="KW-0010">Activator</keyword>
<keyword id="KW-0156">Chromatin regulator</keyword>
<keyword id="KW-0175">Coiled coil</keyword>
<keyword id="KW-0963">Cytoplasm</keyword>
<keyword id="KW-0227">DNA damage</keyword>
<keyword id="KW-0234">DNA repair</keyword>
<keyword id="KW-0539">Nucleus</keyword>
<keyword id="KW-1185">Reference proteome</keyword>
<keyword id="KW-0804">Transcription</keyword>
<keyword id="KW-0805">Transcription regulation</keyword>
<dbReference type="EMBL" id="AP006852">
    <property type="protein sequence ID" value="BAE44879.1"/>
    <property type="molecule type" value="Genomic_DNA"/>
</dbReference>
<dbReference type="EMBL" id="CP017629">
    <property type="protein sequence ID" value="AOW30717.1"/>
    <property type="molecule type" value="Genomic_DNA"/>
</dbReference>
<dbReference type="RefSeq" id="XP_710529.1">
    <property type="nucleotide sequence ID" value="XM_705437.1"/>
</dbReference>
<dbReference type="SMR" id="Q59LC9"/>
<dbReference type="FunCoup" id="Q59LC9">
    <property type="interactions" value="749"/>
</dbReference>
<dbReference type="STRING" id="237561.Q59LC9"/>
<dbReference type="EnsemblFungi" id="C7_03770C_A-T">
    <property type="protein sequence ID" value="C7_03770C_A-T-p1"/>
    <property type="gene ID" value="C7_03770C_A"/>
</dbReference>
<dbReference type="GeneID" id="3647864"/>
<dbReference type="KEGG" id="cal:CAALFM_C703770CA"/>
<dbReference type="CGD" id="CAL0000173992">
    <property type="gene designation" value="YAF9"/>
</dbReference>
<dbReference type="VEuPathDB" id="FungiDB:C7_03770C_A"/>
<dbReference type="eggNOG" id="KOG3149">
    <property type="taxonomic scope" value="Eukaryota"/>
</dbReference>
<dbReference type="HOGENOM" id="CLU_051385_2_1_1"/>
<dbReference type="InParanoid" id="Q59LC9"/>
<dbReference type="OMA" id="VKPYHNE"/>
<dbReference type="OrthoDB" id="16041at2759"/>
<dbReference type="Proteomes" id="UP000000559">
    <property type="component" value="Chromosome 7"/>
</dbReference>
<dbReference type="GO" id="GO:0005737">
    <property type="term" value="C:cytoplasm"/>
    <property type="evidence" value="ECO:0007669"/>
    <property type="project" value="UniProtKB-SubCell"/>
</dbReference>
<dbReference type="GO" id="GO:0035267">
    <property type="term" value="C:NuA4 histone acetyltransferase complex"/>
    <property type="evidence" value="ECO:0000314"/>
    <property type="project" value="CGD"/>
</dbReference>
<dbReference type="GO" id="GO:0005634">
    <property type="term" value="C:nucleus"/>
    <property type="evidence" value="ECO:0000315"/>
    <property type="project" value="CGD"/>
</dbReference>
<dbReference type="GO" id="GO:0000812">
    <property type="term" value="C:Swr1 complex"/>
    <property type="evidence" value="ECO:0000318"/>
    <property type="project" value="GO_Central"/>
</dbReference>
<dbReference type="GO" id="GO:0003682">
    <property type="term" value="F:chromatin binding"/>
    <property type="evidence" value="ECO:0000315"/>
    <property type="project" value="CGD"/>
</dbReference>
<dbReference type="GO" id="GO:0042393">
    <property type="term" value="F:histone binding"/>
    <property type="evidence" value="ECO:0000318"/>
    <property type="project" value="GO_Central"/>
</dbReference>
<dbReference type="GO" id="GO:0033554">
    <property type="term" value="P:cellular response to stress"/>
    <property type="evidence" value="ECO:0000315"/>
    <property type="project" value="CGD"/>
</dbReference>
<dbReference type="GO" id="GO:0006338">
    <property type="term" value="P:chromatin remodeling"/>
    <property type="evidence" value="ECO:0000315"/>
    <property type="project" value="CGD"/>
</dbReference>
<dbReference type="GO" id="GO:0006281">
    <property type="term" value="P:DNA repair"/>
    <property type="evidence" value="ECO:0007669"/>
    <property type="project" value="UniProtKB-KW"/>
</dbReference>
<dbReference type="GO" id="GO:0006357">
    <property type="term" value="P:regulation of transcription by RNA polymerase II"/>
    <property type="evidence" value="ECO:0000318"/>
    <property type="project" value="GO_Central"/>
</dbReference>
<dbReference type="GO" id="GO:0009408">
    <property type="term" value="P:response to heat"/>
    <property type="evidence" value="ECO:0000315"/>
    <property type="project" value="CGD"/>
</dbReference>
<dbReference type="GO" id="GO:0006970">
    <property type="term" value="P:response to osmotic stress"/>
    <property type="evidence" value="ECO:0000315"/>
    <property type="project" value="CGD"/>
</dbReference>
<dbReference type="CDD" id="cd16908">
    <property type="entry name" value="YEATS_Yaf9_like"/>
    <property type="match status" value="1"/>
</dbReference>
<dbReference type="FunFam" id="2.60.40.1970:FF:000007">
    <property type="entry name" value="Protein AF-9 homolog"/>
    <property type="match status" value="1"/>
</dbReference>
<dbReference type="Gene3D" id="2.60.40.1970">
    <property type="entry name" value="YEATS domain"/>
    <property type="match status" value="1"/>
</dbReference>
<dbReference type="InterPro" id="IPR038704">
    <property type="entry name" value="YEAST_sf"/>
</dbReference>
<dbReference type="InterPro" id="IPR005033">
    <property type="entry name" value="YEATS"/>
</dbReference>
<dbReference type="InterPro" id="IPR055129">
    <property type="entry name" value="YEATS_dom"/>
</dbReference>
<dbReference type="PANTHER" id="PTHR23195">
    <property type="entry name" value="YEATS DOMAIN"/>
    <property type="match status" value="1"/>
</dbReference>
<dbReference type="Pfam" id="PF03366">
    <property type="entry name" value="YEATS"/>
    <property type="match status" value="1"/>
</dbReference>
<dbReference type="PROSITE" id="PS51037">
    <property type="entry name" value="YEATS"/>
    <property type="match status" value="1"/>
</dbReference>
<proteinExistence type="inferred from homology"/>
<accession>Q59LC9</accession>
<accession>A0A1D8PRF7</accession>
<accession>Q3MNY1</accession>
<organism>
    <name type="scientific">Candida albicans (strain SC5314 / ATCC MYA-2876)</name>
    <name type="common">Yeast</name>
    <dbReference type="NCBI Taxonomy" id="237561"/>
    <lineage>
        <taxon>Eukaryota</taxon>
        <taxon>Fungi</taxon>
        <taxon>Dikarya</taxon>
        <taxon>Ascomycota</taxon>
        <taxon>Saccharomycotina</taxon>
        <taxon>Pichiomycetes</taxon>
        <taxon>Debaryomycetaceae</taxon>
        <taxon>Candida/Lodderomyces clade</taxon>
        <taxon>Candida</taxon>
    </lineage>
</organism>
<sequence>MSSTHSRRIKFVSISVPILYGNHAIKLTPEKRKPTTPPEHTHEWTVFFKPVLGDIDLTPLIKKVTFKLHETYENPVRTLESPPYQVTETGWGEFEIIIKLHFQPGVELGINEKNFQIFHALKLHPYNPQAPQAQQPQVQQSQAQPPQQQFGGEGGSVGTVIRERENGEVHSVLYDELVFNEPTEKTFEILTSKPVNLIPYKLSNLDKRDQEYIRPDEIDELNRMDIYIDKVKQEIENQRNQYKLLEQEKLALLQ</sequence>
<feature type="chain" id="PRO_0000215924" description="Protein AF-9 homolog">
    <location>
        <begin position="1"/>
        <end position="254"/>
    </location>
</feature>
<feature type="domain" description="YEATS" evidence="3">
    <location>
        <begin position="8"/>
        <end position="193"/>
    </location>
</feature>
<feature type="region of interest" description="Disordered" evidence="4">
    <location>
        <begin position="128"/>
        <end position="158"/>
    </location>
</feature>
<feature type="coiled-coil region" evidence="2">
    <location>
        <begin position="218"/>
        <end position="254"/>
    </location>
</feature>
<feature type="compositionally biased region" description="Low complexity" evidence="4">
    <location>
        <begin position="129"/>
        <end position="149"/>
    </location>
</feature>
<name>AF9_CANAL</name>
<comment type="function">
    <text evidence="1">Component of the SWR1 complex which mediates the ATP-dependent exchange of histone H2A for the H2A variant HZT1 leading to transcriptional regulation of selected genes by chromatin remodeling. Component of the NuA4 histone acetyltransferase complex which is involved in transcriptional activation of selected genes principally by acetylation of nucleosomal histones H4 and H2A. The NuA4 complex is also involved in DNA repair. Yaf9 may also be required for viability in conditions in which the structural integrity of the spindle is compromised (By similarity).</text>
</comment>
<comment type="subunit">
    <text evidence="1">Component of the SWR1 chromatin-remodeling complex and of the NuA4 histone acetyltransferase complex.</text>
</comment>
<comment type="subcellular location">
    <subcellularLocation>
        <location evidence="1">Cytoplasm</location>
    </subcellularLocation>
    <subcellularLocation>
        <location evidence="3">Nucleus</location>
    </subcellularLocation>
</comment>
<comment type="domain">
    <text evidence="1">The coiled-coil domain is required for assembly into the NuA4 complex.</text>
</comment>
<comment type="similarity">
    <text evidence="5">Belongs to the YAF9 family.</text>
</comment>